<feature type="chain" id="PRO_0000340236" description="Branched-chain-amino-acid aminotransferase">
    <location>
        <begin position="1"/>
        <end position="378"/>
    </location>
</feature>
<feature type="modified residue" description="N6-(pyridoxal phosphate)lysine" evidence="2">
    <location>
        <position position="213"/>
    </location>
</feature>
<accession>Q54N47</accession>
<gene>
    <name type="primary">bcaA</name>
    <name type="ORF">DDB_G0285509</name>
</gene>
<name>BCAT_DICDI</name>
<sequence length="378" mass="42244">MFGRFIRQYSTSKNIINVNELIVEKTKTPFQKYTDKTKLVFGKQFSDHMIEVQWTKEEGWGVPKISGYHNLSIPPSASVLHYALECFEGMKAYKDSNGKIRLFRPDQNMNRFLNSAKRICLPEFNKEAVIELIKKLCVLDKDWIPEGKGYSLYLRPTLIATQNSLGVGASNSALMFVIASPVGPYYPEGFKPVKLIADDQYVRAWAGGSGAFKLGSNYAPTIFPQLEAAKKGFSQVLWLLNDYVTEVGTMNMFVFWNNAQGEKELITPPLGDGTILPGVTRDSILKLTQQWGEFKITEKNFTMTELAKAIKEGRVFEAFGAGTAAIVSPIESISYKGENYSIPIDASLNCGPLTKRISDSIMAIQYGETNSDWSVIVD</sequence>
<keyword id="KW-0028">Amino-acid biosynthesis</keyword>
<keyword id="KW-0032">Aminotransferase</keyword>
<keyword id="KW-0100">Branched-chain amino acid biosynthesis</keyword>
<keyword id="KW-0663">Pyridoxal phosphate</keyword>
<keyword id="KW-1185">Reference proteome</keyword>
<keyword id="KW-0808">Transferase</keyword>
<evidence type="ECO:0000250" key="1"/>
<evidence type="ECO:0000250" key="2">
    <source>
        <dbReference type="UniProtKB" id="P54687"/>
    </source>
</evidence>
<evidence type="ECO:0000250" key="3">
    <source>
        <dbReference type="UniProtKB" id="P54690"/>
    </source>
</evidence>
<evidence type="ECO:0000305" key="4"/>
<organism>
    <name type="scientific">Dictyostelium discoideum</name>
    <name type="common">Social amoeba</name>
    <dbReference type="NCBI Taxonomy" id="44689"/>
    <lineage>
        <taxon>Eukaryota</taxon>
        <taxon>Amoebozoa</taxon>
        <taxon>Evosea</taxon>
        <taxon>Eumycetozoa</taxon>
        <taxon>Dictyostelia</taxon>
        <taxon>Dictyosteliales</taxon>
        <taxon>Dictyosteliaceae</taxon>
        <taxon>Dictyostelium</taxon>
    </lineage>
</organism>
<proteinExistence type="inferred from homology"/>
<dbReference type="EC" id="2.6.1.42" evidence="3"/>
<dbReference type="EMBL" id="AAFI02000079">
    <property type="protein sequence ID" value="EAL64592.1"/>
    <property type="molecule type" value="Genomic_DNA"/>
</dbReference>
<dbReference type="RefSeq" id="XP_638096.1">
    <property type="nucleotide sequence ID" value="XM_633004.1"/>
</dbReference>
<dbReference type="SMR" id="Q54N47"/>
<dbReference type="FunCoup" id="Q54N47">
    <property type="interactions" value="386"/>
</dbReference>
<dbReference type="STRING" id="44689.Q54N47"/>
<dbReference type="PaxDb" id="44689-DDB0230183"/>
<dbReference type="EnsemblProtists" id="EAL64592">
    <property type="protein sequence ID" value="EAL64592"/>
    <property type="gene ID" value="DDB_G0285509"/>
</dbReference>
<dbReference type="GeneID" id="8625144"/>
<dbReference type="KEGG" id="ddi:DDB_G0285509"/>
<dbReference type="dictyBase" id="DDB_G0285509">
    <property type="gene designation" value="bcaA"/>
</dbReference>
<dbReference type="VEuPathDB" id="AmoebaDB:DDB_G0285509"/>
<dbReference type="eggNOG" id="KOG0975">
    <property type="taxonomic scope" value="Eukaryota"/>
</dbReference>
<dbReference type="HOGENOM" id="CLU_031922_0_2_1"/>
<dbReference type="InParanoid" id="Q54N47"/>
<dbReference type="OMA" id="LTEVFAC"/>
<dbReference type="PhylomeDB" id="Q54N47"/>
<dbReference type="Reactome" id="R-DDI-70895">
    <property type="pathway name" value="Branched-chain amino acid catabolism"/>
</dbReference>
<dbReference type="PRO" id="PR:Q54N47"/>
<dbReference type="Proteomes" id="UP000002195">
    <property type="component" value="Chromosome 4"/>
</dbReference>
<dbReference type="GO" id="GO:0005739">
    <property type="term" value="C:mitochondrion"/>
    <property type="evidence" value="ECO:0000318"/>
    <property type="project" value="GO_Central"/>
</dbReference>
<dbReference type="GO" id="GO:0004084">
    <property type="term" value="F:branched-chain-amino-acid transaminase activity"/>
    <property type="evidence" value="ECO:0000250"/>
    <property type="project" value="dictyBase"/>
</dbReference>
<dbReference type="GO" id="GO:0052656">
    <property type="term" value="F:L-isoleucine-2-oxoglutarate transaminase activity"/>
    <property type="evidence" value="ECO:0007669"/>
    <property type="project" value="RHEA"/>
</dbReference>
<dbReference type="GO" id="GO:0052654">
    <property type="term" value="F:L-leucine-2-oxoglutarate transaminase activity"/>
    <property type="evidence" value="ECO:0007669"/>
    <property type="project" value="RHEA"/>
</dbReference>
<dbReference type="GO" id="GO:0052655">
    <property type="term" value="F:L-valine-2-oxoglutarate transaminase activity"/>
    <property type="evidence" value="ECO:0007669"/>
    <property type="project" value="RHEA"/>
</dbReference>
<dbReference type="GO" id="GO:0008652">
    <property type="term" value="P:amino acid biosynthetic process"/>
    <property type="evidence" value="ECO:0007669"/>
    <property type="project" value="UniProtKB-KW"/>
</dbReference>
<dbReference type="GO" id="GO:0009082">
    <property type="term" value="P:branched-chain amino acid biosynthetic process"/>
    <property type="evidence" value="ECO:0000250"/>
    <property type="project" value="dictyBase"/>
</dbReference>
<dbReference type="CDD" id="cd01557">
    <property type="entry name" value="BCAT_beta_family"/>
    <property type="match status" value="1"/>
</dbReference>
<dbReference type="FunFam" id="3.20.10.10:FF:000004">
    <property type="entry name" value="Branched-chain-amino-acid aminotransferase"/>
    <property type="match status" value="1"/>
</dbReference>
<dbReference type="FunFam" id="3.30.470.10:FF:000005">
    <property type="entry name" value="Branched-chain-amino-acid aminotransferase"/>
    <property type="match status" value="1"/>
</dbReference>
<dbReference type="Gene3D" id="3.30.470.10">
    <property type="match status" value="1"/>
</dbReference>
<dbReference type="Gene3D" id="3.20.10.10">
    <property type="entry name" value="D-amino Acid Aminotransferase, subunit A, domain 2"/>
    <property type="match status" value="1"/>
</dbReference>
<dbReference type="InterPro" id="IPR001544">
    <property type="entry name" value="Aminotrans_IV"/>
</dbReference>
<dbReference type="InterPro" id="IPR018300">
    <property type="entry name" value="Aminotrans_IV_CS"/>
</dbReference>
<dbReference type="InterPro" id="IPR036038">
    <property type="entry name" value="Aminotransferase-like"/>
</dbReference>
<dbReference type="InterPro" id="IPR005786">
    <property type="entry name" value="B_amino_transII"/>
</dbReference>
<dbReference type="InterPro" id="IPR043132">
    <property type="entry name" value="BCAT-like_C"/>
</dbReference>
<dbReference type="InterPro" id="IPR043131">
    <property type="entry name" value="BCAT-like_N"/>
</dbReference>
<dbReference type="InterPro" id="IPR033939">
    <property type="entry name" value="BCAT_family"/>
</dbReference>
<dbReference type="NCBIfam" id="TIGR01123">
    <property type="entry name" value="ilvE_II"/>
    <property type="match status" value="1"/>
</dbReference>
<dbReference type="NCBIfam" id="NF009897">
    <property type="entry name" value="PRK13357.1"/>
    <property type="match status" value="1"/>
</dbReference>
<dbReference type="PANTHER" id="PTHR11825:SF44">
    <property type="entry name" value="BRANCHED-CHAIN-AMINO-ACID AMINOTRANSFERASE"/>
    <property type="match status" value="1"/>
</dbReference>
<dbReference type="PANTHER" id="PTHR11825">
    <property type="entry name" value="SUBGROUP IIII AMINOTRANSFERASE"/>
    <property type="match status" value="1"/>
</dbReference>
<dbReference type="Pfam" id="PF01063">
    <property type="entry name" value="Aminotran_4"/>
    <property type="match status" value="1"/>
</dbReference>
<dbReference type="PIRSF" id="PIRSF006468">
    <property type="entry name" value="BCAT1"/>
    <property type="match status" value="1"/>
</dbReference>
<dbReference type="SUPFAM" id="SSF56752">
    <property type="entry name" value="D-aminoacid aminotransferase-like PLP-dependent enzymes"/>
    <property type="match status" value="1"/>
</dbReference>
<dbReference type="PROSITE" id="PS00770">
    <property type="entry name" value="AA_TRANSFER_CLASS_4"/>
    <property type="match status" value="1"/>
</dbReference>
<comment type="function">
    <text evidence="3">Catalyzes the first reaction in the catabolism of the essential branched chain amino acids leucine, isoleucine, and valine.</text>
</comment>
<comment type="catalytic activity">
    <reaction evidence="3">
        <text>L-leucine + 2-oxoglutarate = 4-methyl-2-oxopentanoate + L-glutamate</text>
        <dbReference type="Rhea" id="RHEA:18321"/>
        <dbReference type="ChEBI" id="CHEBI:16810"/>
        <dbReference type="ChEBI" id="CHEBI:17865"/>
        <dbReference type="ChEBI" id="CHEBI:29985"/>
        <dbReference type="ChEBI" id="CHEBI:57427"/>
        <dbReference type="EC" id="2.6.1.42"/>
    </reaction>
    <physiologicalReaction direction="left-to-right" evidence="3">
        <dbReference type="Rhea" id="RHEA:18322"/>
    </physiologicalReaction>
</comment>
<comment type="catalytic activity">
    <reaction evidence="3">
        <text>L-isoleucine + 2-oxoglutarate = (S)-3-methyl-2-oxopentanoate + L-glutamate</text>
        <dbReference type="Rhea" id="RHEA:24801"/>
        <dbReference type="ChEBI" id="CHEBI:16810"/>
        <dbReference type="ChEBI" id="CHEBI:29985"/>
        <dbReference type="ChEBI" id="CHEBI:35146"/>
        <dbReference type="ChEBI" id="CHEBI:58045"/>
        <dbReference type="EC" id="2.6.1.42"/>
    </reaction>
    <physiologicalReaction direction="left-to-right" evidence="3">
        <dbReference type="Rhea" id="RHEA:24802"/>
    </physiologicalReaction>
</comment>
<comment type="catalytic activity">
    <reaction evidence="3">
        <text>L-valine + 2-oxoglutarate = 3-methyl-2-oxobutanoate + L-glutamate</text>
        <dbReference type="Rhea" id="RHEA:24813"/>
        <dbReference type="ChEBI" id="CHEBI:11851"/>
        <dbReference type="ChEBI" id="CHEBI:16810"/>
        <dbReference type="ChEBI" id="CHEBI:29985"/>
        <dbReference type="ChEBI" id="CHEBI:57762"/>
        <dbReference type="EC" id="2.6.1.42"/>
    </reaction>
    <physiologicalReaction direction="left-to-right" evidence="3">
        <dbReference type="Rhea" id="RHEA:24814"/>
    </physiologicalReaction>
</comment>
<comment type="cofactor">
    <cofactor evidence="3">
        <name>pyridoxal 5'-phosphate</name>
        <dbReference type="ChEBI" id="CHEBI:597326"/>
    </cofactor>
</comment>
<comment type="subunit">
    <text evidence="1">Homodimer.</text>
</comment>
<comment type="similarity">
    <text evidence="4">Belongs to the class-IV pyridoxal-phosphate-dependent aminotransferase family.</text>
</comment>
<reference key="1">
    <citation type="journal article" date="2005" name="Nature">
        <title>The genome of the social amoeba Dictyostelium discoideum.</title>
        <authorList>
            <person name="Eichinger L."/>
            <person name="Pachebat J.A."/>
            <person name="Gloeckner G."/>
            <person name="Rajandream M.A."/>
            <person name="Sucgang R."/>
            <person name="Berriman M."/>
            <person name="Song J."/>
            <person name="Olsen R."/>
            <person name="Szafranski K."/>
            <person name="Xu Q."/>
            <person name="Tunggal B."/>
            <person name="Kummerfeld S."/>
            <person name="Madera M."/>
            <person name="Konfortov B.A."/>
            <person name="Rivero F."/>
            <person name="Bankier A.T."/>
            <person name="Lehmann R."/>
            <person name="Hamlin N."/>
            <person name="Davies R."/>
            <person name="Gaudet P."/>
            <person name="Fey P."/>
            <person name="Pilcher K."/>
            <person name="Chen G."/>
            <person name="Saunders D."/>
            <person name="Sodergren E.J."/>
            <person name="Davis P."/>
            <person name="Kerhornou A."/>
            <person name="Nie X."/>
            <person name="Hall N."/>
            <person name="Anjard C."/>
            <person name="Hemphill L."/>
            <person name="Bason N."/>
            <person name="Farbrother P."/>
            <person name="Desany B."/>
            <person name="Just E."/>
            <person name="Morio T."/>
            <person name="Rost R."/>
            <person name="Churcher C.M."/>
            <person name="Cooper J."/>
            <person name="Haydock S."/>
            <person name="van Driessche N."/>
            <person name="Cronin A."/>
            <person name="Goodhead I."/>
            <person name="Muzny D.M."/>
            <person name="Mourier T."/>
            <person name="Pain A."/>
            <person name="Lu M."/>
            <person name="Harper D."/>
            <person name="Lindsay R."/>
            <person name="Hauser H."/>
            <person name="James K.D."/>
            <person name="Quiles M."/>
            <person name="Madan Babu M."/>
            <person name="Saito T."/>
            <person name="Buchrieser C."/>
            <person name="Wardroper A."/>
            <person name="Felder M."/>
            <person name="Thangavelu M."/>
            <person name="Johnson D."/>
            <person name="Knights A."/>
            <person name="Loulseged H."/>
            <person name="Mungall K.L."/>
            <person name="Oliver K."/>
            <person name="Price C."/>
            <person name="Quail M.A."/>
            <person name="Urushihara H."/>
            <person name="Hernandez J."/>
            <person name="Rabbinowitsch E."/>
            <person name="Steffen D."/>
            <person name="Sanders M."/>
            <person name="Ma J."/>
            <person name="Kohara Y."/>
            <person name="Sharp S."/>
            <person name="Simmonds M.N."/>
            <person name="Spiegler S."/>
            <person name="Tivey A."/>
            <person name="Sugano S."/>
            <person name="White B."/>
            <person name="Walker D."/>
            <person name="Woodward J.R."/>
            <person name="Winckler T."/>
            <person name="Tanaka Y."/>
            <person name="Shaulsky G."/>
            <person name="Schleicher M."/>
            <person name="Weinstock G.M."/>
            <person name="Rosenthal A."/>
            <person name="Cox E.C."/>
            <person name="Chisholm R.L."/>
            <person name="Gibbs R.A."/>
            <person name="Loomis W.F."/>
            <person name="Platzer M."/>
            <person name="Kay R.R."/>
            <person name="Williams J.G."/>
            <person name="Dear P.H."/>
            <person name="Noegel A.A."/>
            <person name="Barrell B.G."/>
            <person name="Kuspa A."/>
        </authorList>
    </citation>
    <scope>NUCLEOTIDE SEQUENCE [LARGE SCALE GENOMIC DNA]</scope>
    <source>
        <strain>AX4</strain>
    </source>
</reference>
<protein>
    <recommendedName>
        <fullName>Branched-chain-amino-acid aminotransferase</fullName>
        <ecNumber evidence="3">2.6.1.42</ecNumber>
    </recommendedName>
</protein>